<dbReference type="EMBL" id="U73044">
    <property type="protein sequence ID" value="AAC49930.1"/>
    <property type="molecule type" value="mRNA"/>
</dbReference>
<dbReference type="EMBL" id="CU329671">
    <property type="protein sequence ID" value="CAB52738.1"/>
    <property type="molecule type" value="Genomic_DNA"/>
</dbReference>
<dbReference type="PIR" id="T39741">
    <property type="entry name" value="T39741"/>
</dbReference>
<dbReference type="RefSeq" id="NP_596719.1">
    <property type="nucleotide sequence ID" value="NM_001022644.2"/>
</dbReference>
<dbReference type="SMR" id="Q9USY4"/>
<dbReference type="BioGRID" id="276376">
    <property type="interactions" value="10"/>
</dbReference>
<dbReference type="IntAct" id="Q9USY4">
    <property type="interactions" value="1"/>
</dbReference>
<dbReference type="STRING" id="284812.Q9USY4"/>
<dbReference type="iPTMnet" id="Q9USY4"/>
<dbReference type="SwissPalm" id="Q9USY4"/>
<dbReference type="PaxDb" id="4896-SPBC1861.02.1"/>
<dbReference type="EnsemblFungi" id="SPBC1861.02.1">
    <property type="protein sequence ID" value="SPBC1861.02.1:pep"/>
    <property type="gene ID" value="SPBC1861.02"/>
</dbReference>
<dbReference type="GeneID" id="2539827"/>
<dbReference type="KEGG" id="spo:2539827"/>
<dbReference type="PomBase" id="SPBC1861.02">
    <property type="gene designation" value="abp2"/>
</dbReference>
<dbReference type="VEuPathDB" id="FungiDB:SPBC1861.02"/>
<dbReference type="eggNOG" id="ENOG502QV85">
    <property type="taxonomic scope" value="Eukaryota"/>
</dbReference>
<dbReference type="HOGENOM" id="CLU_039335_0_0_1"/>
<dbReference type="InParanoid" id="Q9USY4"/>
<dbReference type="OMA" id="CLCCNPW"/>
<dbReference type="PRO" id="PR:Q9USY4"/>
<dbReference type="Proteomes" id="UP000002485">
    <property type="component" value="Chromosome II"/>
</dbReference>
<dbReference type="GO" id="GO:0044732">
    <property type="term" value="C:mitotic spindle pole body"/>
    <property type="evidence" value="ECO:0007005"/>
    <property type="project" value="PomBase"/>
</dbReference>
<dbReference type="GO" id="GO:0005634">
    <property type="term" value="C:nucleus"/>
    <property type="evidence" value="ECO:0007005"/>
    <property type="project" value="PomBase"/>
</dbReference>
<dbReference type="GO" id="GO:0003688">
    <property type="term" value="F:DNA replication origin binding"/>
    <property type="evidence" value="ECO:0000314"/>
    <property type="project" value="PomBase"/>
</dbReference>
<dbReference type="InterPro" id="IPR018562">
    <property type="entry name" value="ARS-binding_2"/>
</dbReference>
<dbReference type="PANTHER" id="PTHR42048">
    <property type="entry name" value="ARS-BINDING PROTEIN 2"/>
    <property type="match status" value="1"/>
</dbReference>
<dbReference type="PANTHER" id="PTHR42048:SF1">
    <property type="entry name" value="ARS-BINDING PROTEIN 2"/>
    <property type="match status" value="1"/>
</dbReference>
<dbReference type="Pfam" id="PF09441">
    <property type="entry name" value="Abp2"/>
    <property type="match status" value="1"/>
</dbReference>
<protein>
    <recommendedName>
        <fullName>ARS-binding protein 2</fullName>
    </recommendedName>
</protein>
<comment type="function">
    <text evidence="3">Binds, preferentially, to the Maundrell ARS consensus sequence within ARS3002.</text>
</comment>
<comment type="subcellular location">
    <subcellularLocation>
        <location evidence="3">Nucleus</location>
    </subcellularLocation>
</comment>
<evidence type="ECO:0000256" key="1">
    <source>
        <dbReference type="SAM" id="MobiDB-lite"/>
    </source>
</evidence>
<evidence type="ECO:0000269" key="2">
    <source>
    </source>
</evidence>
<evidence type="ECO:0000269" key="3">
    <source>
    </source>
</evidence>
<evidence type="ECO:0000305" key="4"/>
<gene>
    <name type="primary">abp2</name>
    <name type="ORF">SPBC1861.02</name>
</gene>
<reference key="1">
    <citation type="journal article" date="1998" name="Mol. Cell. Biol.">
        <title>Isolation, characterization, and molecular cloning of a protein (Abp2) that binds to a Schizosaccharomyces pombe origin of replication (ars3002).</title>
        <authorList>
            <person name="Sanchez J.P."/>
            <person name="Murakami Y."/>
            <person name="Huberman J.A."/>
            <person name="Hurwitz J."/>
        </authorList>
    </citation>
    <scope>NUCLEOTIDE SEQUENCE [MRNA]</scope>
    <scope>PROTEIN SEQUENCE OF 154-171; 302-308; 312-328; 377-384 AND 419-431</scope>
    <scope>FUNCTION</scope>
    <scope>SUBCELLULAR LOCATION</scope>
    <scope>MUTAGENESIS OF ARG-331; GLY-332 AND ARG-333</scope>
    <source>
        <strain>972 / ATCC 24843</strain>
    </source>
</reference>
<reference key="2">
    <citation type="journal article" date="2002" name="Nature">
        <title>The genome sequence of Schizosaccharomyces pombe.</title>
        <authorList>
            <person name="Wood V."/>
            <person name="Gwilliam R."/>
            <person name="Rajandream M.A."/>
            <person name="Lyne M.H."/>
            <person name="Lyne R."/>
            <person name="Stewart A."/>
            <person name="Sgouros J.G."/>
            <person name="Peat N."/>
            <person name="Hayles J."/>
            <person name="Baker S.G."/>
            <person name="Basham D."/>
            <person name="Bowman S."/>
            <person name="Brooks K."/>
            <person name="Brown D."/>
            <person name="Brown S."/>
            <person name="Chillingworth T."/>
            <person name="Churcher C.M."/>
            <person name="Collins M."/>
            <person name="Connor R."/>
            <person name="Cronin A."/>
            <person name="Davis P."/>
            <person name="Feltwell T."/>
            <person name="Fraser A."/>
            <person name="Gentles S."/>
            <person name="Goble A."/>
            <person name="Hamlin N."/>
            <person name="Harris D.E."/>
            <person name="Hidalgo J."/>
            <person name="Hodgson G."/>
            <person name="Holroyd S."/>
            <person name="Hornsby T."/>
            <person name="Howarth S."/>
            <person name="Huckle E.J."/>
            <person name="Hunt S."/>
            <person name="Jagels K."/>
            <person name="James K.D."/>
            <person name="Jones L."/>
            <person name="Jones M."/>
            <person name="Leather S."/>
            <person name="McDonald S."/>
            <person name="McLean J."/>
            <person name="Mooney P."/>
            <person name="Moule S."/>
            <person name="Mungall K.L."/>
            <person name="Murphy L.D."/>
            <person name="Niblett D."/>
            <person name="Odell C."/>
            <person name="Oliver K."/>
            <person name="O'Neil S."/>
            <person name="Pearson D."/>
            <person name="Quail M.A."/>
            <person name="Rabbinowitsch E."/>
            <person name="Rutherford K.M."/>
            <person name="Rutter S."/>
            <person name="Saunders D."/>
            <person name="Seeger K."/>
            <person name="Sharp S."/>
            <person name="Skelton J."/>
            <person name="Simmonds M.N."/>
            <person name="Squares R."/>
            <person name="Squares S."/>
            <person name="Stevens K."/>
            <person name="Taylor K."/>
            <person name="Taylor R.G."/>
            <person name="Tivey A."/>
            <person name="Walsh S.V."/>
            <person name="Warren T."/>
            <person name="Whitehead S."/>
            <person name="Woodward J.R."/>
            <person name="Volckaert G."/>
            <person name="Aert R."/>
            <person name="Robben J."/>
            <person name="Grymonprez B."/>
            <person name="Weltjens I."/>
            <person name="Vanstreels E."/>
            <person name="Rieger M."/>
            <person name="Schaefer M."/>
            <person name="Mueller-Auer S."/>
            <person name="Gabel C."/>
            <person name="Fuchs M."/>
            <person name="Duesterhoeft A."/>
            <person name="Fritzc C."/>
            <person name="Holzer E."/>
            <person name="Moestl D."/>
            <person name="Hilbert H."/>
            <person name="Borzym K."/>
            <person name="Langer I."/>
            <person name="Beck A."/>
            <person name="Lehrach H."/>
            <person name="Reinhardt R."/>
            <person name="Pohl T.M."/>
            <person name="Eger P."/>
            <person name="Zimmermann W."/>
            <person name="Wedler H."/>
            <person name="Wambutt R."/>
            <person name="Purnelle B."/>
            <person name="Goffeau A."/>
            <person name="Cadieu E."/>
            <person name="Dreano S."/>
            <person name="Gloux S."/>
            <person name="Lelaure V."/>
            <person name="Mottier S."/>
            <person name="Galibert F."/>
            <person name="Aves S.J."/>
            <person name="Xiang Z."/>
            <person name="Hunt C."/>
            <person name="Moore K."/>
            <person name="Hurst S.M."/>
            <person name="Lucas M."/>
            <person name="Rochet M."/>
            <person name="Gaillardin C."/>
            <person name="Tallada V.A."/>
            <person name="Garzon A."/>
            <person name="Thode G."/>
            <person name="Daga R.R."/>
            <person name="Cruzado L."/>
            <person name="Jimenez J."/>
            <person name="Sanchez M."/>
            <person name="del Rey F."/>
            <person name="Benito J."/>
            <person name="Dominguez A."/>
            <person name="Revuelta J.L."/>
            <person name="Moreno S."/>
            <person name="Armstrong J."/>
            <person name="Forsburg S.L."/>
            <person name="Cerutti L."/>
            <person name="Lowe T."/>
            <person name="McCombie W.R."/>
            <person name="Paulsen I."/>
            <person name="Potashkin J."/>
            <person name="Shpakovski G.V."/>
            <person name="Ussery D."/>
            <person name="Barrell B.G."/>
            <person name="Nurse P."/>
        </authorList>
    </citation>
    <scope>NUCLEOTIDE SEQUENCE [LARGE SCALE GENOMIC DNA]</scope>
    <source>
        <strain>972 / ATCC 24843</strain>
    </source>
</reference>
<reference key="3">
    <citation type="journal article" date="2008" name="J. Proteome Res.">
        <title>Phosphoproteome analysis of fission yeast.</title>
        <authorList>
            <person name="Wilson-Grady J.T."/>
            <person name="Villen J."/>
            <person name="Gygi S.P."/>
        </authorList>
    </citation>
    <scope>PHOSPHORYLATION [LARGE SCALE ANALYSIS] AT SER-297; SER-298 AND SER-302</scope>
    <scope>IDENTIFICATION BY MASS SPECTROMETRY</scope>
</reference>
<sequence>MNFYSLLPSRHDVSADNITEKFCQFCLCCNPWYAGADTRQLANAFNMIPKSEGQKFEIWVLFLLVRQYHQKIINSWSKLVGFLGVERKDEQSTQKIQQYVVRLKRWMSQTHVDAFFDYLLNKPNPYYLEIPETQPQVRCNVNVTDDLVIKSLRAGLMSHPDVNSSSISTMRTSTSPSNWIHSASASLDDNTHNLGSFVTNPHADSQECPTPQSLLMRASHHMSERGSQQAHQTTPQNHSLPHPPNMFEPPDEDHQLPSAANNSHNHDHAFQTAEAVGVADSIDPDWHQWPDDLRDVSSPKESDGLNDSWSRQTNQVETENVENEAGVPRKRGRPPGARNKIKRLRSEPSVSLTLSISWYERFEKLMHAQNTMLRSAFSHVARLPMETVSQLLSHYTETISQYLPPSETSPIPKTPNFKFISSTLLALVSSHSEILEASTDRLIWTVHQGPLTATICHAFNLEKAPSMHSLAEAQMIPDVPISHSNSMEPLDTVSSLKLEIAKLNAALKEKNLELENLKRKIMNAVFD</sequence>
<proteinExistence type="evidence at protein level"/>
<name>ABP2_SCHPO</name>
<organism>
    <name type="scientific">Schizosaccharomyces pombe (strain 972 / ATCC 24843)</name>
    <name type="common">Fission yeast</name>
    <dbReference type="NCBI Taxonomy" id="284812"/>
    <lineage>
        <taxon>Eukaryota</taxon>
        <taxon>Fungi</taxon>
        <taxon>Dikarya</taxon>
        <taxon>Ascomycota</taxon>
        <taxon>Taphrinomycotina</taxon>
        <taxon>Schizosaccharomycetes</taxon>
        <taxon>Schizosaccharomycetales</taxon>
        <taxon>Schizosaccharomycetaceae</taxon>
        <taxon>Schizosaccharomyces</taxon>
    </lineage>
</organism>
<keyword id="KW-0903">Direct protein sequencing</keyword>
<keyword id="KW-0238">DNA-binding</keyword>
<keyword id="KW-0539">Nucleus</keyword>
<keyword id="KW-0597">Phosphoprotein</keyword>
<keyword id="KW-1185">Reference proteome</keyword>
<accession>Q9USY4</accession>
<accession>P78967</accession>
<feature type="chain" id="PRO_0000064430" description="ARS-binding protein 2">
    <location>
        <begin position="1"/>
        <end position="527"/>
    </location>
</feature>
<feature type="region of interest" description="Disordered" evidence="1">
    <location>
        <begin position="160"/>
        <end position="184"/>
    </location>
</feature>
<feature type="region of interest" description="Disordered" evidence="1">
    <location>
        <begin position="219"/>
        <end position="265"/>
    </location>
</feature>
<feature type="region of interest" description="Disordered" evidence="1">
    <location>
        <begin position="282"/>
        <end position="344"/>
    </location>
</feature>
<feature type="compositionally biased region" description="Low complexity" evidence="1">
    <location>
        <begin position="164"/>
        <end position="177"/>
    </location>
</feature>
<feature type="compositionally biased region" description="Polar residues" evidence="1">
    <location>
        <begin position="225"/>
        <end position="239"/>
    </location>
</feature>
<feature type="compositionally biased region" description="Basic and acidic residues" evidence="1">
    <location>
        <begin position="284"/>
        <end position="303"/>
    </location>
</feature>
<feature type="compositionally biased region" description="Basic residues" evidence="1">
    <location>
        <begin position="328"/>
        <end position="343"/>
    </location>
</feature>
<feature type="modified residue" description="Phosphoserine" evidence="2">
    <location>
        <position position="297"/>
    </location>
</feature>
<feature type="modified residue" description="Phosphoserine" evidence="2">
    <location>
        <position position="298"/>
    </location>
</feature>
<feature type="modified residue" description="Phosphoserine" evidence="2">
    <location>
        <position position="302"/>
    </location>
</feature>
<feature type="mutagenesis site" description="40-fold decrease in DNA-binding." evidence="3">
    <original>R</original>
    <variation>A</variation>
    <location>
        <position position="331"/>
    </location>
</feature>
<feature type="mutagenesis site" description="Loss of DNA-binding." evidence="3">
    <original>G</original>
    <variation>A</variation>
    <location>
        <position position="332"/>
    </location>
</feature>
<feature type="mutagenesis site" description="Loss of DNA-binding." evidence="3">
    <original>R</original>
    <variation>A</variation>
    <location>
        <position position="333"/>
    </location>
</feature>
<feature type="sequence conflict" description="In Ref. 1; AAC49930." evidence="4" ref="1">
    <original>A</original>
    <variation>P</variation>
    <location>
        <position position="260"/>
    </location>
</feature>